<organism>
    <name type="scientific">Vibrio vulnificus (strain YJ016)</name>
    <dbReference type="NCBI Taxonomy" id="196600"/>
    <lineage>
        <taxon>Bacteria</taxon>
        <taxon>Pseudomonadati</taxon>
        <taxon>Pseudomonadota</taxon>
        <taxon>Gammaproteobacteria</taxon>
        <taxon>Vibrionales</taxon>
        <taxon>Vibrionaceae</taxon>
        <taxon>Vibrio</taxon>
    </lineage>
</organism>
<keyword id="KW-0012">Acyltransferase</keyword>
<keyword id="KW-0441">Lipid A biosynthesis</keyword>
<keyword id="KW-0444">Lipid biosynthesis</keyword>
<keyword id="KW-0443">Lipid metabolism</keyword>
<keyword id="KW-0677">Repeat</keyword>
<keyword id="KW-0808">Transferase</keyword>
<protein>
    <recommendedName>
        <fullName evidence="1">UDP-3-O-acylglucosamine N-acyltransferase</fullName>
        <ecNumber evidence="1">2.3.1.191</ecNumber>
    </recommendedName>
</protein>
<gene>
    <name evidence="1" type="primary">lpxD</name>
    <name type="ordered locus">VV2547</name>
</gene>
<reference key="1">
    <citation type="journal article" date="2003" name="Genome Res.">
        <title>Comparative genome analysis of Vibrio vulnificus, a marine pathogen.</title>
        <authorList>
            <person name="Chen C.-Y."/>
            <person name="Wu K.-M."/>
            <person name="Chang Y.-C."/>
            <person name="Chang C.-H."/>
            <person name="Tsai H.-C."/>
            <person name="Liao T.-L."/>
            <person name="Liu Y.-M."/>
            <person name="Chen H.-J."/>
            <person name="Shen A.B.-T."/>
            <person name="Li J.-C."/>
            <person name="Su T.-L."/>
            <person name="Shao C.-P."/>
            <person name="Lee C.-T."/>
            <person name="Hor L.-I."/>
            <person name="Tsai S.-F."/>
        </authorList>
    </citation>
    <scope>NUCLEOTIDE SEQUENCE [LARGE SCALE GENOMIC DNA]</scope>
    <source>
        <strain>YJ016</strain>
    </source>
</reference>
<comment type="function">
    <text evidence="1">Catalyzes the N-acylation of UDP-3-O-acylglucosamine using 3-hydroxyacyl-ACP as the acyl donor. Is involved in the biosynthesis of lipid A, a phosphorylated glycolipid that anchors the lipopolysaccharide to the outer membrane of the cell.</text>
</comment>
<comment type="catalytic activity">
    <reaction evidence="1">
        <text>a UDP-3-O-[(3R)-3-hydroxyacyl]-alpha-D-glucosamine + a (3R)-hydroxyacyl-[ACP] = a UDP-2-N,3-O-bis[(3R)-3-hydroxyacyl]-alpha-D-glucosamine + holo-[ACP] + H(+)</text>
        <dbReference type="Rhea" id="RHEA:53836"/>
        <dbReference type="Rhea" id="RHEA-COMP:9685"/>
        <dbReference type="Rhea" id="RHEA-COMP:9945"/>
        <dbReference type="ChEBI" id="CHEBI:15378"/>
        <dbReference type="ChEBI" id="CHEBI:64479"/>
        <dbReference type="ChEBI" id="CHEBI:78827"/>
        <dbReference type="ChEBI" id="CHEBI:137740"/>
        <dbReference type="ChEBI" id="CHEBI:137748"/>
        <dbReference type="EC" id="2.3.1.191"/>
    </reaction>
</comment>
<comment type="pathway">
    <text evidence="1">Bacterial outer membrane biogenesis; LPS lipid A biosynthesis.</text>
</comment>
<comment type="subunit">
    <text evidence="1">Homotrimer.</text>
</comment>
<comment type="similarity">
    <text evidence="1">Belongs to the transferase hexapeptide repeat family. LpxD subfamily.</text>
</comment>
<dbReference type="EC" id="2.3.1.191" evidence="1"/>
<dbReference type="EMBL" id="BA000037">
    <property type="protein sequence ID" value="BAC95311.1"/>
    <property type="molecule type" value="Genomic_DNA"/>
</dbReference>
<dbReference type="RefSeq" id="WP_011150958.1">
    <property type="nucleotide sequence ID" value="NC_005139.1"/>
</dbReference>
<dbReference type="SMR" id="Q7MIH0"/>
<dbReference type="STRING" id="672.VV93_v1c22660"/>
<dbReference type="KEGG" id="vvy:VV2547"/>
<dbReference type="PATRIC" id="fig|196600.6.peg.2551"/>
<dbReference type="eggNOG" id="COG1044">
    <property type="taxonomic scope" value="Bacteria"/>
</dbReference>
<dbReference type="HOGENOM" id="CLU_049865_0_1_6"/>
<dbReference type="UniPathway" id="UPA00973"/>
<dbReference type="Proteomes" id="UP000002675">
    <property type="component" value="Chromosome I"/>
</dbReference>
<dbReference type="GO" id="GO:0016020">
    <property type="term" value="C:membrane"/>
    <property type="evidence" value="ECO:0007669"/>
    <property type="project" value="GOC"/>
</dbReference>
<dbReference type="GO" id="GO:0016410">
    <property type="term" value="F:N-acyltransferase activity"/>
    <property type="evidence" value="ECO:0007669"/>
    <property type="project" value="InterPro"/>
</dbReference>
<dbReference type="GO" id="GO:0009245">
    <property type="term" value="P:lipid A biosynthetic process"/>
    <property type="evidence" value="ECO:0007669"/>
    <property type="project" value="UniProtKB-UniRule"/>
</dbReference>
<dbReference type="CDD" id="cd03352">
    <property type="entry name" value="LbH_LpxD"/>
    <property type="match status" value="1"/>
</dbReference>
<dbReference type="FunFam" id="2.160.10.10:FF:000005">
    <property type="entry name" value="UDP-3-O-(3-hydroxymyristoyl)glucosamine N-acyltransferase"/>
    <property type="match status" value="1"/>
</dbReference>
<dbReference type="Gene3D" id="1.20.5.170">
    <property type="match status" value="1"/>
</dbReference>
<dbReference type="Gene3D" id="2.160.10.10">
    <property type="entry name" value="Hexapeptide repeat proteins"/>
    <property type="match status" value="1"/>
</dbReference>
<dbReference type="Gene3D" id="3.40.1390.10">
    <property type="entry name" value="MurE/MurF, N-terminal domain"/>
    <property type="match status" value="1"/>
</dbReference>
<dbReference type="HAMAP" id="MF_00523">
    <property type="entry name" value="LpxD"/>
    <property type="match status" value="1"/>
</dbReference>
<dbReference type="InterPro" id="IPR001451">
    <property type="entry name" value="Hexapep"/>
</dbReference>
<dbReference type="InterPro" id="IPR018357">
    <property type="entry name" value="Hexapep_transf_CS"/>
</dbReference>
<dbReference type="InterPro" id="IPR007691">
    <property type="entry name" value="LpxD"/>
</dbReference>
<dbReference type="InterPro" id="IPR011004">
    <property type="entry name" value="Trimer_LpxA-like_sf"/>
</dbReference>
<dbReference type="InterPro" id="IPR020573">
    <property type="entry name" value="UDP_GlcNAc_AcTrfase_non-rep"/>
</dbReference>
<dbReference type="NCBIfam" id="TIGR01853">
    <property type="entry name" value="lipid_A_lpxD"/>
    <property type="match status" value="1"/>
</dbReference>
<dbReference type="NCBIfam" id="NF002060">
    <property type="entry name" value="PRK00892.1"/>
    <property type="match status" value="1"/>
</dbReference>
<dbReference type="PANTHER" id="PTHR43378">
    <property type="entry name" value="UDP-3-O-ACYLGLUCOSAMINE N-ACYLTRANSFERASE"/>
    <property type="match status" value="1"/>
</dbReference>
<dbReference type="PANTHER" id="PTHR43378:SF2">
    <property type="entry name" value="UDP-3-O-ACYLGLUCOSAMINE N-ACYLTRANSFERASE 1, MITOCHONDRIAL-RELATED"/>
    <property type="match status" value="1"/>
</dbReference>
<dbReference type="Pfam" id="PF00132">
    <property type="entry name" value="Hexapep"/>
    <property type="match status" value="2"/>
</dbReference>
<dbReference type="Pfam" id="PF04613">
    <property type="entry name" value="LpxD"/>
    <property type="match status" value="1"/>
</dbReference>
<dbReference type="SUPFAM" id="SSF51161">
    <property type="entry name" value="Trimeric LpxA-like enzymes"/>
    <property type="match status" value="1"/>
</dbReference>
<dbReference type="PROSITE" id="PS00101">
    <property type="entry name" value="HEXAPEP_TRANSFERASES"/>
    <property type="match status" value="3"/>
</dbReference>
<accession>Q7MIH0</accession>
<name>LPXD_VIBVY</name>
<sequence length="343" mass="36185">MMTLTLAELAKITGGELHGDETVCVSRVAPMDKAGEGDVTFLSNPKYAVHLAECKATVVMLKAEQRKHCSGHVLVVDDPYVAFAKVAQALDTTPKPADGIAPSAVIASDAILGQNVSIGANAVIETGVSLGDNVVIGAGCFIGKNATIGQNTKLWANVTIYHQVQIGADCLIQAGTVIGSDGFGYANDRGEWIKIPQLGSVRIGNRVEIGACTTIDRGALDDTIIEDNVVLDNQLQIAHNVHIGYGTVMPGGTIVAGSTTIGKYCAIGGASVINGHITIADGVNITGMGMVMRSIEEKGVYSSGIPLQTNKQWRKTAARVHRIEEMNKRLKAVEKIVEQKKED</sequence>
<proteinExistence type="inferred from homology"/>
<evidence type="ECO:0000255" key="1">
    <source>
        <dbReference type="HAMAP-Rule" id="MF_00523"/>
    </source>
</evidence>
<feature type="chain" id="PRO_0000059710" description="UDP-3-O-acylglucosamine N-acyltransferase">
    <location>
        <begin position="1"/>
        <end position="343"/>
    </location>
</feature>
<feature type="active site" description="Proton acceptor" evidence="1">
    <location>
        <position position="239"/>
    </location>
</feature>